<name>TDX1_CAEEL</name>
<comment type="function">
    <text evidence="1">Thiol-specific peroxidase that catalyzes the reduction of hydrogen peroxide and organic hydroperoxides to water and alcohols, respectively. Plays a role in cell protection against oxidative stress by detoxifying peroxides and as sensor of hydrogen peroxide-mediated signaling events.</text>
</comment>
<comment type="catalytic activity">
    <reaction evidence="1">
        <text>a hydroperoxide + [thioredoxin]-dithiol = an alcohol + [thioredoxin]-disulfide + H2O</text>
        <dbReference type="Rhea" id="RHEA:62620"/>
        <dbReference type="Rhea" id="RHEA-COMP:10698"/>
        <dbReference type="Rhea" id="RHEA-COMP:10700"/>
        <dbReference type="ChEBI" id="CHEBI:15377"/>
        <dbReference type="ChEBI" id="CHEBI:29950"/>
        <dbReference type="ChEBI" id="CHEBI:30879"/>
        <dbReference type="ChEBI" id="CHEBI:35924"/>
        <dbReference type="ChEBI" id="CHEBI:50058"/>
        <dbReference type="EC" id="1.11.1.24"/>
    </reaction>
</comment>
<comment type="subunit">
    <text evidence="1">Homodimer; disulfide-linked, upon oxidation.</text>
</comment>
<comment type="miscellaneous">
    <text evidence="1">The active site is a conserved redox-active cysteine residue, the peroxidatic cysteine (C(P)), which makes the nucleophilic attack on the peroxide substrate. The peroxide oxidizes the C(P)-SH to cysteine sulfenic acid (C(P)-SOH), which then reacts with another cysteine residue, the resolving cysteine (C(R)), to form a disulfide bridge. The disulfide is subsequently reduced by an appropriate electron donor to complete the catalytic cycle. In this typical 2-Cys peroxiredoxin, C(R) is provided by the other dimeric subunit to form an intersubunit disulfide. The disulfide is subsequently reduced by thioredoxin.</text>
</comment>
<comment type="similarity">
    <text evidence="3">Belongs to the peroxiredoxin family. AhpC/Prx1 subfamily.</text>
</comment>
<organism>
    <name type="scientific">Caenorhabditis elegans</name>
    <dbReference type="NCBI Taxonomy" id="6239"/>
    <lineage>
        <taxon>Eukaryota</taxon>
        <taxon>Metazoa</taxon>
        <taxon>Ecdysozoa</taxon>
        <taxon>Nematoda</taxon>
        <taxon>Chromadorea</taxon>
        <taxon>Rhabditida</taxon>
        <taxon>Rhabditina</taxon>
        <taxon>Rhabditomorpha</taxon>
        <taxon>Rhabditoidea</taxon>
        <taxon>Rhabditidae</taxon>
        <taxon>Peloderinae</taxon>
        <taxon>Caenorhabditis</taxon>
    </lineage>
</organism>
<evidence type="ECO:0000250" key="1">
    <source>
        <dbReference type="UniProtKB" id="Q06830"/>
    </source>
</evidence>
<evidence type="ECO:0000255" key="2">
    <source>
        <dbReference type="PROSITE-ProRule" id="PRU00691"/>
    </source>
</evidence>
<evidence type="ECO:0000305" key="3"/>
<accession>Q21824</accession>
<feature type="chain" id="PRO_0000135088" description="Probable peroxiredoxin prdx-3">
    <location>
        <begin position="1"/>
        <end position="226"/>
    </location>
</feature>
<feature type="domain" description="Thioredoxin" evidence="2">
    <location>
        <begin position="33"/>
        <end position="191"/>
    </location>
</feature>
<feature type="active site" description="Cysteine sulfenic acid (-SOH) intermediate" evidence="1">
    <location>
        <position position="78"/>
    </location>
</feature>
<feature type="disulfide bond" description="Interchain (with C-199); in linked form" evidence="1">
    <location>
        <position position="78"/>
    </location>
</feature>
<feature type="disulfide bond" description="Interchain (with C-78); in linked form" evidence="1">
    <location>
        <position position="199"/>
    </location>
</feature>
<proteinExistence type="inferred from homology"/>
<sequence>MFSSAVRALCRTVPTVATRQLSTSRALLSLRPLGPKNTVPAFKGTAVVDGDFKVISDQDYKGKWLVMFFYPLDFTFVCPTEIIAYGDRANEFRSLGAEVVACSCDSHFSHLAWVNTPRKDGGLGDMDIPLLADFNKKIADSFGVLDKESGLSYRGLFLIDPSGTVRHTTCNDLPVGRSVDETLRVLKAFQFSDKHGEVCPADWHEDSPTIKPGVATSKEYFNKVNK</sequence>
<protein>
    <recommendedName>
        <fullName>Probable peroxiredoxin prdx-3</fullName>
        <ecNumber evidence="1">1.11.1.24</ecNumber>
    </recommendedName>
    <alternativeName>
        <fullName>Thiol-specific antioxidant protein</fullName>
    </alternativeName>
    <alternativeName>
        <fullName>Thioredoxin peroxidase</fullName>
    </alternativeName>
    <alternativeName>
        <fullName>Thioredoxin-dependent peroxide reductase</fullName>
    </alternativeName>
    <alternativeName>
        <fullName evidence="3">Thioredoxin-dependent peroxiredoxin 1</fullName>
    </alternativeName>
</protein>
<reference key="1">
    <citation type="journal article" date="1998" name="Science">
        <title>Genome sequence of the nematode C. elegans: a platform for investigating biology.</title>
        <authorList>
            <consortium name="The C. elegans sequencing consortium"/>
        </authorList>
    </citation>
    <scope>NUCLEOTIDE SEQUENCE [LARGE SCALE GENOMIC DNA]</scope>
    <source>
        <strain>Bristol N2</strain>
    </source>
</reference>
<keyword id="KW-0049">Antioxidant</keyword>
<keyword id="KW-1015">Disulfide bond</keyword>
<keyword id="KW-0560">Oxidoreductase</keyword>
<keyword id="KW-0575">Peroxidase</keyword>
<keyword id="KW-0676">Redox-active center</keyword>
<keyword id="KW-1185">Reference proteome</keyword>
<dbReference type="EC" id="1.11.1.24" evidence="1"/>
<dbReference type="EMBL" id="Z32683">
    <property type="protein sequence ID" value="CAA83619.1"/>
    <property type="molecule type" value="Genomic_DNA"/>
</dbReference>
<dbReference type="PIR" id="S43598">
    <property type="entry name" value="S43598"/>
</dbReference>
<dbReference type="RefSeq" id="NP_497892.1">
    <property type="nucleotide sequence ID" value="NM_065491.5"/>
</dbReference>
<dbReference type="SMR" id="Q21824"/>
<dbReference type="BioGRID" id="40809">
    <property type="interactions" value="27"/>
</dbReference>
<dbReference type="FunCoup" id="Q21824">
    <property type="interactions" value="592"/>
</dbReference>
<dbReference type="STRING" id="6239.R07E5.2.1"/>
<dbReference type="PaxDb" id="6239-R07E5.2"/>
<dbReference type="PeptideAtlas" id="Q21824"/>
<dbReference type="EnsemblMetazoa" id="R07E5.2.1">
    <property type="protein sequence ID" value="R07E5.2.1"/>
    <property type="gene ID" value="WBGene00011110"/>
</dbReference>
<dbReference type="GeneID" id="175573"/>
<dbReference type="KEGG" id="cel:CELE_R07E5.2"/>
<dbReference type="UCSC" id="R07E5.2.1">
    <property type="organism name" value="c. elegans"/>
</dbReference>
<dbReference type="AGR" id="WB:WBGene00011110"/>
<dbReference type="CTD" id="175573"/>
<dbReference type="WormBase" id="R07E5.2">
    <property type="protein sequence ID" value="CE00657"/>
    <property type="gene ID" value="WBGene00011110"/>
    <property type="gene designation" value="prdx-3"/>
</dbReference>
<dbReference type="eggNOG" id="KOG0852">
    <property type="taxonomic scope" value="Eukaryota"/>
</dbReference>
<dbReference type="GeneTree" id="ENSGT00940000153430"/>
<dbReference type="HOGENOM" id="CLU_042529_21_0_1"/>
<dbReference type="InParanoid" id="Q21824"/>
<dbReference type="OMA" id="VRHTTCN"/>
<dbReference type="OrthoDB" id="185659at2759"/>
<dbReference type="PhylomeDB" id="Q21824"/>
<dbReference type="BRENDA" id="1.11.1.24">
    <property type="organism ID" value="1045"/>
</dbReference>
<dbReference type="Reactome" id="R-CEL-3299685">
    <property type="pathway name" value="Detoxification of Reactive Oxygen Species"/>
</dbReference>
<dbReference type="PRO" id="PR:Q21824"/>
<dbReference type="Proteomes" id="UP000001940">
    <property type="component" value="Chromosome III"/>
</dbReference>
<dbReference type="Bgee" id="WBGene00011110">
    <property type="expression patterns" value="Expressed in adult organism and 4 other cell types or tissues"/>
</dbReference>
<dbReference type="GO" id="GO:0005829">
    <property type="term" value="C:cytosol"/>
    <property type="evidence" value="ECO:0000318"/>
    <property type="project" value="GO_Central"/>
</dbReference>
<dbReference type="GO" id="GO:0005739">
    <property type="term" value="C:mitochondrion"/>
    <property type="evidence" value="ECO:0000318"/>
    <property type="project" value="GO_Central"/>
</dbReference>
<dbReference type="GO" id="GO:0008379">
    <property type="term" value="F:thioredoxin peroxidase activity"/>
    <property type="evidence" value="ECO:0000318"/>
    <property type="project" value="GO_Central"/>
</dbReference>
<dbReference type="GO" id="GO:0045454">
    <property type="term" value="P:cell redox homeostasis"/>
    <property type="evidence" value="ECO:0000318"/>
    <property type="project" value="GO_Central"/>
</dbReference>
<dbReference type="GO" id="GO:0042744">
    <property type="term" value="P:hydrogen peroxide catabolic process"/>
    <property type="evidence" value="ECO:0000318"/>
    <property type="project" value="GO_Central"/>
</dbReference>
<dbReference type="GO" id="GO:0006979">
    <property type="term" value="P:response to oxidative stress"/>
    <property type="evidence" value="ECO:0000318"/>
    <property type="project" value="GO_Central"/>
</dbReference>
<dbReference type="CDD" id="cd03015">
    <property type="entry name" value="PRX_Typ2cys"/>
    <property type="match status" value="1"/>
</dbReference>
<dbReference type="FunFam" id="3.40.30.10:FF:000003">
    <property type="entry name" value="Peroxiredoxin 1"/>
    <property type="match status" value="1"/>
</dbReference>
<dbReference type="Gene3D" id="3.40.30.10">
    <property type="entry name" value="Glutaredoxin"/>
    <property type="match status" value="1"/>
</dbReference>
<dbReference type="InterPro" id="IPR000866">
    <property type="entry name" value="AhpC/TSA"/>
</dbReference>
<dbReference type="InterPro" id="IPR050217">
    <property type="entry name" value="Peroxiredoxin"/>
</dbReference>
<dbReference type="InterPro" id="IPR024706">
    <property type="entry name" value="Peroxiredoxin_AhpC-typ"/>
</dbReference>
<dbReference type="InterPro" id="IPR019479">
    <property type="entry name" value="Peroxiredoxin_C"/>
</dbReference>
<dbReference type="InterPro" id="IPR036249">
    <property type="entry name" value="Thioredoxin-like_sf"/>
</dbReference>
<dbReference type="InterPro" id="IPR013766">
    <property type="entry name" value="Thioredoxin_domain"/>
</dbReference>
<dbReference type="PANTHER" id="PTHR10681">
    <property type="entry name" value="THIOREDOXIN PEROXIDASE"/>
    <property type="match status" value="1"/>
</dbReference>
<dbReference type="PANTHER" id="PTHR10681:SF128">
    <property type="entry name" value="THIOREDOXIN-DEPENDENT PEROXIDE REDUCTASE, MITOCHONDRIAL"/>
    <property type="match status" value="1"/>
</dbReference>
<dbReference type="Pfam" id="PF10417">
    <property type="entry name" value="1-cysPrx_C"/>
    <property type="match status" value="1"/>
</dbReference>
<dbReference type="Pfam" id="PF00578">
    <property type="entry name" value="AhpC-TSA"/>
    <property type="match status" value="1"/>
</dbReference>
<dbReference type="PIRSF" id="PIRSF000239">
    <property type="entry name" value="AHPC"/>
    <property type="match status" value="1"/>
</dbReference>
<dbReference type="SUPFAM" id="SSF52833">
    <property type="entry name" value="Thioredoxin-like"/>
    <property type="match status" value="1"/>
</dbReference>
<dbReference type="PROSITE" id="PS51352">
    <property type="entry name" value="THIOREDOXIN_2"/>
    <property type="match status" value="1"/>
</dbReference>
<gene>
    <name type="primary">prdx-3</name>
    <name type="ORF">R07E5.2</name>
</gene>